<name>RSMA_CALS4</name>
<keyword id="KW-0963">Cytoplasm</keyword>
<keyword id="KW-0489">Methyltransferase</keyword>
<keyword id="KW-1185">Reference proteome</keyword>
<keyword id="KW-0694">RNA-binding</keyword>
<keyword id="KW-0698">rRNA processing</keyword>
<keyword id="KW-0949">S-adenosyl-L-methionine</keyword>
<keyword id="KW-0808">Transferase</keyword>
<protein>
    <recommendedName>
        <fullName evidence="1">Ribosomal RNA small subunit methyltransferase A</fullName>
        <ecNumber evidence="1">2.1.1.182</ecNumber>
    </recommendedName>
    <alternativeName>
        <fullName evidence="1">16S rRNA (adenine(1518)-N(6)/adenine(1519)-N(6))-dimethyltransferase</fullName>
    </alternativeName>
    <alternativeName>
        <fullName evidence="1">16S rRNA dimethyladenosine transferase</fullName>
    </alternativeName>
    <alternativeName>
        <fullName evidence="1">16S rRNA dimethylase</fullName>
    </alternativeName>
    <alternativeName>
        <fullName evidence="1">S-adenosylmethionine-6-N', N'-adenosyl(rRNA) dimethyltransferase</fullName>
    </alternativeName>
</protein>
<comment type="function">
    <text evidence="1">Specifically dimethylates two adjacent adenosines (A1518 and A1519) in the loop of a conserved hairpin near the 3'-end of 16S rRNA in the 30S particle. May play a critical role in biogenesis of 30S subunits.</text>
</comment>
<comment type="catalytic activity">
    <reaction evidence="1">
        <text>adenosine(1518)/adenosine(1519) in 16S rRNA + 4 S-adenosyl-L-methionine = N(6)-dimethyladenosine(1518)/N(6)-dimethyladenosine(1519) in 16S rRNA + 4 S-adenosyl-L-homocysteine + 4 H(+)</text>
        <dbReference type="Rhea" id="RHEA:19609"/>
        <dbReference type="Rhea" id="RHEA-COMP:10232"/>
        <dbReference type="Rhea" id="RHEA-COMP:10233"/>
        <dbReference type="ChEBI" id="CHEBI:15378"/>
        <dbReference type="ChEBI" id="CHEBI:57856"/>
        <dbReference type="ChEBI" id="CHEBI:59789"/>
        <dbReference type="ChEBI" id="CHEBI:74411"/>
        <dbReference type="ChEBI" id="CHEBI:74493"/>
        <dbReference type="EC" id="2.1.1.182"/>
    </reaction>
</comment>
<comment type="subcellular location">
    <subcellularLocation>
        <location evidence="1">Cytoplasm</location>
    </subcellularLocation>
</comment>
<comment type="similarity">
    <text evidence="1">Belongs to the class I-like SAM-binding methyltransferase superfamily. rRNA adenine N(6)-methyltransferase family. RsmA subfamily.</text>
</comment>
<reference key="1">
    <citation type="journal article" date="2002" name="Genome Res.">
        <title>A complete sequence of the T. tengcongensis genome.</title>
        <authorList>
            <person name="Bao Q."/>
            <person name="Tian Y."/>
            <person name="Li W."/>
            <person name="Xu Z."/>
            <person name="Xuan Z."/>
            <person name="Hu S."/>
            <person name="Dong W."/>
            <person name="Yang J."/>
            <person name="Chen Y."/>
            <person name="Xue Y."/>
            <person name="Xu Y."/>
            <person name="Lai X."/>
            <person name="Huang L."/>
            <person name="Dong X."/>
            <person name="Ma Y."/>
            <person name="Ling L."/>
            <person name="Tan H."/>
            <person name="Chen R."/>
            <person name="Wang J."/>
            <person name="Yu J."/>
            <person name="Yang H."/>
        </authorList>
    </citation>
    <scope>NUCLEOTIDE SEQUENCE [LARGE SCALE GENOMIC DNA]</scope>
    <source>
        <strain>DSM 15242 / JCM 11007 / NBRC 100824 / MB4</strain>
    </source>
</reference>
<evidence type="ECO:0000255" key="1">
    <source>
        <dbReference type="HAMAP-Rule" id="MF_00607"/>
    </source>
</evidence>
<accession>Q8RDC8</accession>
<proteinExistence type="inferred from homology"/>
<organism>
    <name type="scientific">Caldanaerobacter subterraneus subsp. tengcongensis (strain DSM 15242 / JCM 11007 / NBRC 100824 / MB4)</name>
    <name type="common">Thermoanaerobacter tengcongensis</name>
    <dbReference type="NCBI Taxonomy" id="273068"/>
    <lineage>
        <taxon>Bacteria</taxon>
        <taxon>Bacillati</taxon>
        <taxon>Bacillota</taxon>
        <taxon>Clostridia</taxon>
        <taxon>Thermoanaerobacterales</taxon>
        <taxon>Thermoanaerobacteraceae</taxon>
        <taxon>Caldanaerobacter</taxon>
    </lineage>
</organism>
<dbReference type="EC" id="2.1.1.182" evidence="1"/>
<dbReference type="EMBL" id="AE008691">
    <property type="protein sequence ID" value="AAM23417.1"/>
    <property type="molecule type" value="Genomic_DNA"/>
</dbReference>
<dbReference type="RefSeq" id="WP_011024622.1">
    <property type="nucleotide sequence ID" value="NC_003869.1"/>
</dbReference>
<dbReference type="SMR" id="Q8RDC8"/>
<dbReference type="STRING" id="273068.TTE0113"/>
<dbReference type="KEGG" id="tte:TTE0113"/>
<dbReference type="eggNOG" id="COG0030">
    <property type="taxonomic scope" value="Bacteria"/>
</dbReference>
<dbReference type="HOGENOM" id="CLU_041220_0_0_9"/>
<dbReference type="OrthoDB" id="9814755at2"/>
<dbReference type="Proteomes" id="UP000000555">
    <property type="component" value="Chromosome"/>
</dbReference>
<dbReference type="GO" id="GO:0005829">
    <property type="term" value="C:cytosol"/>
    <property type="evidence" value="ECO:0007669"/>
    <property type="project" value="TreeGrafter"/>
</dbReference>
<dbReference type="GO" id="GO:0052908">
    <property type="term" value="F:16S rRNA (adenine(1518)-N(6)/adenine(1519)-N(6))-dimethyltransferase activity"/>
    <property type="evidence" value="ECO:0007669"/>
    <property type="project" value="UniProtKB-EC"/>
</dbReference>
<dbReference type="GO" id="GO:0003723">
    <property type="term" value="F:RNA binding"/>
    <property type="evidence" value="ECO:0007669"/>
    <property type="project" value="UniProtKB-KW"/>
</dbReference>
<dbReference type="CDD" id="cd02440">
    <property type="entry name" value="AdoMet_MTases"/>
    <property type="match status" value="1"/>
</dbReference>
<dbReference type="FunFam" id="1.10.8.100:FF:000001">
    <property type="entry name" value="Ribosomal RNA small subunit methyltransferase A"/>
    <property type="match status" value="1"/>
</dbReference>
<dbReference type="FunFam" id="3.40.50.150:FF:000023">
    <property type="entry name" value="Ribosomal RNA small subunit methyltransferase A"/>
    <property type="match status" value="1"/>
</dbReference>
<dbReference type="Gene3D" id="1.10.8.100">
    <property type="entry name" value="Ribosomal RNA adenine dimethylase-like, domain 2"/>
    <property type="match status" value="1"/>
</dbReference>
<dbReference type="Gene3D" id="3.40.50.150">
    <property type="entry name" value="Vaccinia Virus protein VP39"/>
    <property type="match status" value="1"/>
</dbReference>
<dbReference type="HAMAP" id="MF_00607">
    <property type="entry name" value="16SrRNA_methyltr_A"/>
    <property type="match status" value="1"/>
</dbReference>
<dbReference type="InterPro" id="IPR001737">
    <property type="entry name" value="KsgA/Erm"/>
</dbReference>
<dbReference type="InterPro" id="IPR023165">
    <property type="entry name" value="rRNA_Ade_diMease-like_C"/>
</dbReference>
<dbReference type="InterPro" id="IPR020596">
    <property type="entry name" value="rRNA_Ade_Mease_Trfase_CS"/>
</dbReference>
<dbReference type="InterPro" id="IPR020598">
    <property type="entry name" value="rRNA_Ade_methylase_Trfase_N"/>
</dbReference>
<dbReference type="InterPro" id="IPR011530">
    <property type="entry name" value="rRNA_adenine_dimethylase"/>
</dbReference>
<dbReference type="InterPro" id="IPR029063">
    <property type="entry name" value="SAM-dependent_MTases_sf"/>
</dbReference>
<dbReference type="NCBIfam" id="TIGR00755">
    <property type="entry name" value="ksgA"/>
    <property type="match status" value="1"/>
</dbReference>
<dbReference type="PANTHER" id="PTHR11727">
    <property type="entry name" value="DIMETHYLADENOSINE TRANSFERASE"/>
    <property type="match status" value="1"/>
</dbReference>
<dbReference type="PANTHER" id="PTHR11727:SF7">
    <property type="entry name" value="DIMETHYLADENOSINE TRANSFERASE-RELATED"/>
    <property type="match status" value="1"/>
</dbReference>
<dbReference type="Pfam" id="PF00398">
    <property type="entry name" value="RrnaAD"/>
    <property type="match status" value="1"/>
</dbReference>
<dbReference type="SMART" id="SM00650">
    <property type="entry name" value="rADc"/>
    <property type="match status" value="1"/>
</dbReference>
<dbReference type="SUPFAM" id="SSF53335">
    <property type="entry name" value="S-adenosyl-L-methionine-dependent methyltransferases"/>
    <property type="match status" value="1"/>
</dbReference>
<dbReference type="PROSITE" id="PS01131">
    <property type="entry name" value="RRNA_A_DIMETH"/>
    <property type="match status" value="1"/>
</dbReference>
<dbReference type="PROSITE" id="PS51689">
    <property type="entry name" value="SAM_RNA_A_N6_MT"/>
    <property type="match status" value="1"/>
</dbReference>
<gene>
    <name evidence="1" type="primary">rsmA</name>
    <name evidence="1" type="synonym">ksgA</name>
    <name type="ordered locus">TTE0113</name>
</gene>
<feature type="chain" id="PRO_0000101632" description="Ribosomal RNA small subunit methyltransferase A">
    <location>
        <begin position="1"/>
        <end position="268"/>
    </location>
</feature>
<feature type="binding site" evidence="1">
    <location>
        <position position="10"/>
    </location>
    <ligand>
        <name>S-adenosyl-L-methionine</name>
        <dbReference type="ChEBI" id="CHEBI:59789"/>
    </ligand>
</feature>
<feature type="binding site" evidence="1">
    <location>
        <position position="12"/>
    </location>
    <ligand>
        <name>S-adenosyl-L-methionine</name>
        <dbReference type="ChEBI" id="CHEBI:59789"/>
    </ligand>
</feature>
<feature type="binding site" evidence="1">
    <location>
        <position position="37"/>
    </location>
    <ligand>
        <name>S-adenosyl-L-methionine</name>
        <dbReference type="ChEBI" id="CHEBI:59789"/>
    </ligand>
</feature>
<feature type="binding site" evidence="1">
    <location>
        <position position="58"/>
    </location>
    <ligand>
        <name>S-adenosyl-L-methionine</name>
        <dbReference type="ChEBI" id="CHEBI:59789"/>
    </ligand>
</feature>
<feature type="binding site" evidence="1">
    <location>
        <position position="83"/>
    </location>
    <ligand>
        <name>S-adenosyl-L-methionine</name>
        <dbReference type="ChEBI" id="CHEBI:59789"/>
    </ligand>
</feature>
<feature type="binding site" evidence="1">
    <location>
        <position position="107"/>
    </location>
    <ligand>
        <name>S-adenosyl-L-methionine</name>
        <dbReference type="ChEBI" id="CHEBI:59789"/>
    </ligand>
</feature>
<sequence length="268" mass="30287">MKAKKKWGQNFIFDKNLLSKIVRASGVGEEDFVLEVGTGHGGLTEELAKKVKKVVSFEIDKELFEMSREKLKIYKNVVIINEDILEVDLLEIAQEHFDGNSFKVVANLPYYITSPIIMKMLDCKLVKEMTVLVQKEVAERICALPGTKDYGMLTVFVNFKAKPEILFNLPPKVFVPPPKVESSLLKLKVYDKPLVEVKDEKLFSEVVRAAFGQRRKVLSNSLKVLGFSKEVLHETLLKVGISPQARGETLSIDQFANLANALYLLIKE</sequence>